<comment type="function">
    <text evidence="8 10">Catalytic subunit of cellulose synthase terminal complexes ('rosettes'), required for beta-1,4-glucan microfibril crystallization, a major mechanism of the cell wall formation. Involved in the secondary cell wall formation. Required for the xylem cell wall thickening.</text>
</comment>
<comment type="catalytic activity">
    <reaction evidence="16">
        <text>[(1-&gt;4)-beta-D-glucosyl](n) + UDP-alpha-D-glucose = [(1-&gt;4)-beta-D-glucosyl](n+1) + UDP + H(+)</text>
        <dbReference type="Rhea" id="RHEA:19929"/>
        <dbReference type="Rhea" id="RHEA-COMP:10033"/>
        <dbReference type="Rhea" id="RHEA-COMP:10034"/>
        <dbReference type="ChEBI" id="CHEBI:15378"/>
        <dbReference type="ChEBI" id="CHEBI:18246"/>
        <dbReference type="ChEBI" id="CHEBI:58223"/>
        <dbReference type="ChEBI" id="CHEBI:58885"/>
        <dbReference type="EC" id="2.4.1.12"/>
    </reaction>
</comment>
<comment type="cofactor">
    <cofactor evidence="2">
        <name>Zn(2+)</name>
        <dbReference type="ChEBI" id="CHEBI:29105"/>
    </cofactor>
    <text evidence="2">Binds 2 Zn(2+) ions per subunit.</text>
</comment>
<comment type="cofactor">
    <cofactor evidence="1">
        <name>Mn(2+)</name>
        <dbReference type="ChEBI" id="CHEBI:29035"/>
    </cofactor>
</comment>
<comment type="pathway">
    <text>Glycan metabolism; plant cellulose biosynthesis.</text>
</comment>
<comment type="subunit">
    <text evidence="8 9 12">Interacts with CESA7 and CESA8. Assembly with CESA7 and CESA8 is required for functional complex and localization in secondary cell wall deposition sites. Interacts with STL1 and STL2, but not with GOT1 (PubMed:27277162).</text>
</comment>
<comment type="interaction">
    <interactant intactId="EBI-8579072">
        <id>Q84JA6</id>
    </interactant>
    <interactant intactId="EBI-8579072">
        <id>Q84JA6</id>
        <label>CESA4</label>
    </interactant>
    <organismsDiffer>false</organismsDiffer>
    <experiments>3</experiments>
</comment>
<comment type="interaction">
    <interactant intactId="EBI-8579072">
        <id>Q84JA6</id>
    </interactant>
    <interactant intactId="EBI-4477361">
        <id>Q9SWW6</id>
        <label>CESA7</label>
    </interactant>
    <organismsDiffer>false</organismsDiffer>
    <experiments>7</experiments>
</comment>
<comment type="interaction">
    <interactant intactId="EBI-8579072">
        <id>Q84JA6</id>
    </interactant>
    <interactant intactId="EBI-8579199">
        <id>Q8LPK5</id>
        <label>CESA8</label>
    </interactant>
    <organismsDiffer>false</organismsDiffer>
    <experiments>4</experiments>
</comment>
<comment type="subcellular location">
    <subcellularLocation>
        <location evidence="16">Cell membrane</location>
        <topology evidence="16">Multi-pass membrane protein</topology>
    </subcellularLocation>
</comment>
<comment type="tissue specificity">
    <text evidence="6 7 8">Confined to secondary cell wall developing tissues such as xylems and interfascicular regions. Expressed in roots, hypocotyls, leaves, inflorescences and flowers.</text>
</comment>
<comment type="developmental stage">
    <text evidence="6">Not expressed in embryos. In young leaves, localized in transient patches along the vascular system. In young inflorescence stems, observed in vascular bundles of primary xylems. In maturing inflorescence stems, most pronounced in regions of developing interfascicular fibers.</text>
</comment>
<comment type="PTM">
    <text evidence="13">S-acylated.</text>
</comment>
<comment type="disruption phenotype">
    <text evidence="10">Enhanced resistance to the pathogens Ralstonia solanacearum and Plectosphaerella cucumerina.</text>
</comment>
<comment type="similarity">
    <text evidence="16">Belongs to the glycosyltransferase 2 family. Plant cellulose synthase subfamily.</text>
</comment>
<comment type="sequence caution" evidence="16">
    <conflict type="erroneous gene model prediction">
        <sequence resource="EMBL-CDS" id="BAB09063"/>
    </conflict>
</comment>
<accession>Q84JA6</accession>
<accession>Q0WQW9</accession>
<accession>Q8GZN8</accession>
<accession>Q9FNC3</accession>
<proteinExistence type="evidence at protein level"/>
<evidence type="ECO:0000250" key="1">
    <source>
        <dbReference type="UniProtKB" id="Q941L0"/>
    </source>
</evidence>
<evidence type="ECO:0000250" key="2">
    <source>
        <dbReference type="UniProtKB" id="Q9SWW6"/>
    </source>
</evidence>
<evidence type="ECO:0000255" key="3"/>
<evidence type="ECO:0000255" key="4">
    <source>
        <dbReference type="PROSITE-ProRule" id="PRU00498"/>
    </source>
</evidence>
<evidence type="ECO:0000256" key="5">
    <source>
        <dbReference type="SAM" id="MobiDB-lite"/>
    </source>
</evidence>
<evidence type="ECO:0000269" key="6">
    <source>
    </source>
</evidence>
<evidence type="ECO:0000269" key="7">
    <source>
    </source>
</evidence>
<evidence type="ECO:0000269" key="8">
    <source>
    </source>
</evidence>
<evidence type="ECO:0000269" key="9">
    <source>
    </source>
</evidence>
<evidence type="ECO:0000269" key="10">
    <source>
    </source>
</evidence>
<evidence type="ECO:0000269" key="11">
    <source>
    </source>
</evidence>
<evidence type="ECO:0000269" key="12">
    <source>
    </source>
</evidence>
<evidence type="ECO:0000269" key="13">
    <source>
    </source>
</evidence>
<evidence type="ECO:0000303" key="14">
    <source>
    </source>
</evidence>
<evidence type="ECO:0000303" key="15">
    <source>
    </source>
</evidence>
<evidence type="ECO:0000305" key="16"/>
<evidence type="ECO:0000312" key="17">
    <source>
        <dbReference type="Araport" id="AT5G44030"/>
    </source>
</evidence>
<evidence type="ECO:0000312" key="18">
    <source>
        <dbReference type="EMBL" id="BAB09063.1"/>
    </source>
</evidence>
<keyword id="KW-1003">Cell membrane</keyword>
<keyword id="KW-0961">Cell wall biogenesis/degradation</keyword>
<keyword id="KW-0135">Cellulose biosynthesis</keyword>
<keyword id="KW-0175">Coiled coil</keyword>
<keyword id="KW-0325">Glycoprotein</keyword>
<keyword id="KW-0328">Glycosyltransferase</keyword>
<keyword id="KW-0464">Manganese</keyword>
<keyword id="KW-0472">Membrane</keyword>
<keyword id="KW-0479">Metal-binding</keyword>
<keyword id="KW-0597">Phosphoprotein</keyword>
<keyword id="KW-1185">Reference proteome</keyword>
<keyword id="KW-0808">Transferase</keyword>
<keyword id="KW-0812">Transmembrane</keyword>
<keyword id="KW-1133">Transmembrane helix</keyword>
<keyword id="KW-0862">Zinc</keyword>
<keyword id="KW-0863">Zinc-finger</keyword>
<dbReference type="EC" id="2.4.1.12" evidence="16"/>
<dbReference type="EMBL" id="AF458083">
    <property type="protein sequence ID" value="AAO15532.1"/>
    <property type="molecule type" value="mRNA"/>
</dbReference>
<dbReference type="EMBL" id="AB006703">
    <property type="protein sequence ID" value="BAB09063.1"/>
    <property type="status" value="ALT_SEQ"/>
    <property type="molecule type" value="Genomic_DNA"/>
</dbReference>
<dbReference type="EMBL" id="CP002688">
    <property type="protein sequence ID" value="AED95050.1"/>
    <property type="molecule type" value="Genomic_DNA"/>
</dbReference>
<dbReference type="EMBL" id="BT005710">
    <property type="protein sequence ID" value="AAO64130.1"/>
    <property type="molecule type" value="mRNA"/>
</dbReference>
<dbReference type="EMBL" id="BT006111">
    <property type="protein sequence ID" value="AAP04096.1"/>
    <property type="molecule type" value="mRNA"/>
</dbReference>
<dbReference type="EMBL" id="AK228561">
    <property type="protein sequence ID" value="BAF00480.1"/>
    <property type="molecule type" value="mRNA"/>
</dbReference>
<dbReference type="RefSeq" id="NP_199216.2">
    <property type="nucleotide sequence ID" value="NM_123770.4"/>
</dbReference>
<dbReference type="SMR" id="Q84JA6"/>
<dbReference type="BioGRID" id="19676">
    <property type="interactions" value="7"/>
</dbReference>
<dbReference type="FunCoup" id="Q84JA6">
    <property type="interactions" value="77"/>
</dbReference>
<dbReference type="IntAct" id="Q84JA6">
    <property type="interactions" value="2"/>
</dbReference>
<dbReference type="MINT" id="Q84JA6"/>
<dbReference type="STRING" id="3702.Q84JA6"/>
<dbReference type="CAZy" id="GT2">
    <property type="family name" value="Glycosyltransferase Family 2"/>
</dbReference>
<dbReference type="TCDB" id="4.D.3.1.7">
    <property type="family name" value="the glycan glucosyl transferase (opgh) family"/>
</dbReference>
<dbReference type="GlyCosmos" id="Q84JA6">
    <property type="glycosylation" value="1 site, No reported glycans"/>
</dbReference>
<dbReference type="GlyGen" id="Q84JA6">
    <property type="glycosylation" value="1 site"/>
</dbReference>
<dbReference type="iPTMnet" id="Q84JA6"/>
<dbReference type="SwissPalm" id="Q84JA6"/>
<dbReference type="PaxDb" id="3702-AT5G44030.1"/>
<dbReference type="ProteomicsDB" id="220473"/>
<dbReference type="EnsemblPlants" id="AT5G44030.1">
    <property type="protein sequence ID" value="AT5G44030.1"/>
    <property type="gene ID" value="AT5G44030"/>
</dbReference>
<dbReference type="GeneID" id="834426"/>
<dbReference type="Gramene" id="AT5G44030.1">
    <property type="protein sequence ID" value="AT5G44030.1"/>
    <property type="gene ID" value="AT5G44030"/>
</dbReference>
<dbReference type="KEGG" id="ath:AT5G44030"/>
<dbReference type="Araport" id="AT5G44030"/>
<dbReference type="TAIR" id="AT5G44030">
    <property type="gene designation" value="CESA4"/>
</dbReference>
<dbReference type="eggNOG" id="ENOG502QPUN">
    <property type="taxonomic scope" value="Eukaryota"/>
</dbReference>
<dbReference type="HOGENOM" id="CLU_001418_0_2_1"/>
<dbReference type="InParanoid" id="Q84JA6"/>
<dbReference type="PhylomeDB" id="Q84JA6"/>
<dbReference type="BioCyc" id="MetaCyc:MONOMER-2364"/>
<dbReference type="BRENDA" id="2.4.1.12">
    <property type="organism ID" value="399"/>
</dbReference>
<dbReference type="UniPathway" id="UPA00695"/>
<dbReference type="PRO" id="PR:Q84JA6"/>
<dbReference type="Proteomes" id="UP000006548">
    <property type="component" value="Chromosome 5"/>
</dbReference>
<dbReference type="ExpressionAtlas" id="Q84JA6">
    <property type="expression patterns" value="baseline and differential"/>
</dbReference>
<dbReference type="GO" id="GO:0005886">
    <property type="term" value="C:plasma membrane"/>
    <property type="evidence" value="ECO:0007669"/>
    <property type="project" value="UniProtKB-SubCell"/>
</dbReference>
<dbReference type="GO" id="GO:0016760">
    <property type="term" value="F:cellulose synthase (UDP-forming) activity"/>
    <property type="evidence" value="ECO:0007669"/>
    <property type="project" value="UniProtKB-EC"/>
</dbReference>
<dbReference type="GO" id="GO:0042802">
    <property type="term" value="F:identical protein binding"/>
    <property type="evidence" value="ECO:0000353"/>
    <property type="project" value="IntAct"/>
</dbReference>
<dbReference type="GO" id="GO:0008270">
    <property type="term" value="F:zinc ion binding"/>
    <property type="evidence" value="ECO:0007669"/>
    <property type="project" value="UniProtKB-KW"/>
</dbReference>
<dbReference type="GO" id="GO:0071555">
    <property type="term" value="P:cell wall organization"/>
    <property type="evidence" value="ECO:0007669"/>
    <property type="project" value="UniProtKB-KW"/>
</dbReference>
<dbReference type="GO" id="GO:0030244">
    <property type="term" value="P:cellulose biosynthetic process"/>
    <property type="evidence" value="ECO:0000315"/>
    <property type="project" value="TAIR"/>
</dbReference>
<dbReference type="GO" id="GO:0042742">
    <property type="term" value="P:defense response to bacterium"/>
    <property type="evidence" value="ECO:0000315"/>
    <property type="project" value="TAIR"/>
</dbReference>
<dbReference type="GO" id="GO:0050832">
    <property type="term" value="P:defense response to fungus"/>
    <property type="evidence" value="ECO:0000315"/>
    <property type="project" value="TAIR"/>
</dbReference>
<dbReference type="GO" id="GO:0009834">
    <property type="term" value="P:plant-type secondary cell wall biogenesis"/>
    <property type="evidence" value="ECO:0000315"/>
    <property type="project" value="TAIR"/>
</dbReference>
<dbReference type="CDD" id="cd16617">
    <property type="entry name" value="mRING-HC-C4C4_CesA"/>
    <property type="match status" value="1"/>
</dbReference>
<dbReference type="FunFam" id="3.30.40.10:FF:000958">
    <property type="entry name" value="Cellulose synthase"/>
    <property type="match status" value="1"/>
</dbReference>
<dbReference type="FunFam" id="3.90.550.10:FF:000009">
    <property type="entry name" value="Cellulose synthase"/>
    <property type="match status" value="1"/>
</dbReference>
<dbReference type="Gene3D" id="3.90.550.10">
    <property type="entry name" value="Spore Coat Polysaccharide Biosynthesis Protein SpsA, Chain A"/>
    <property type="match status" value="1"/>
</dbReference>
<dbReference type="Gene3D" id="3.30.40.10">
    <property type="entry name" value="Zinc/RING finger domain, C3HC4 (zinc finger)"/>
    <property type="match status" value="1"/>
</dbReference>
<dbReference type="InterPro" id="IPR005150">
    <property type="entry name" value="Cellulose_synth"/>
</dbReference>
<dbReference type="InterPro" id="IPR027934">
    <property type="entry name" value="CES_Znf_RING"/>
</dbReference>
<dbReference type="InterPro" id="IPR029044">
    <property type="entry name" value="Nucleotide-diphossugar_trans"/>
</dbReference>
<dbReference type="InterPro" id="IPR013083">
    <property type="entry name" value="Znf_RING/FYVE/PHD"/>
</dbReference>
<dbReference type="PANTHER" id="PTHR13301">
    <property type="entry name" value="X-BOX TRANSCRIPTION FACTOR-RELATED"/>
    <property type="match status" value="1"/>
</dbReference>
<dbReference type="Pfam" id="PF03552">
    <property type="entry name" value="Cellulose_synt"/>
    <property type="match status" value="1"/>
</dbReference>
<dbReference type="Pfam" id="PF14569">
    <property type="entry name" value="zf-UDP"/>
    <property type="match status" value="1"/>
</dbReference>
<dbReference type="SUPFAM" id="SSF57850">
    <property type="entry name" value="RING/U-box"/>
    <property type="match status" value="1"/>
</dbReference>
<gene>
    <name evidence="14" type="primary">CESA4</name>
    <name evidence="15" type="synonym">IRX5</name>
    <name evidence="17" type="ordered locus">At5g44030</name>
    <name evidence="18" type="ORF">MRH10.14</name>
</gene>
<reference key="1">
    <citation type="journal article" date="2003" name="Proc. Natl. Acad. Sci. U.S.A.">
        <title>Interactions among three distinct CesA proteins essential for cellulose synthesis.</title>
        <authorList>
            <person name="Taylor N.G."/>
            <person name="Howells R.M."/>
            <person name="Huttly A.K."/>
            <person name="Vickers K."/>
            <person name="Turner S.R."/>
        </authorList>
    </citation>
    <scope>NUCLEOTIDE SEQUENCE [MRNA]</scope>
    <scope>FUNCTION</scope>
    <scope>TISSUE SPECIFICITY</scope>
    <scope>INTERACTION WITH CESA7 AND CESA8</scope>
    <scope>MUTAGENESIS OF 989-TRP--CYS-1049</scope>
</reference>
<reference key="2">
    <citation type="journal article" date="1997" name="DNA Res.">
        <title>Structural analysis of Arabidopsis thaliana chromosome 5. II. Sequence features of the regions of 1,044,062 bp covered by thirteen physically assigned P1 clones.</title>
        <authorList>
            <person name="Kotani H."/>
            <person name="Nakamura Y."/>
            <person name="Sato S."/>
            <person name="Kaneko T."/>
            <person name="Asamizu E."/>
            <person name="Miyajima N."/>
            <person name="Tabata S."/>
        </authorList>
    </citation>
    <scope>NUCLEOTIDE SEQUENCE [LARGE SCALE GENOMIC DNA]</scope>
    <source>
        <strain>cv. Columbia</strain>
    </source>
</reference>
<reference key="3">
    <citation type="journal article" date="2017" name="Plant J.">
        <title>Araport11: a complete reannotation of the Arabidopsis thaliana reference genome.</title>
        <authorList>
            <person name="Cheng C.Y."/>
            <person name="Krishnakumar V."/>
            <person name="Chan A.P."/>
            <person name="Thibaud-Nissen F."/>
            <person name="Schobel S."/>
            <person name="Town C.D."/>
        </authorList>
    </citation>
    <scope>GENOME REANNOTATION</scope>
    <source>
        <strain>cv. Columbia</strain>
    </source>
</reference>
<reference key="4">
    <citation type="journal article" date="2003" name="Science">
        <title>Empirical analysis of transcriptional activity in the Arabidopsis genome.</title>
        <authorList>
            <person name="Yamada K."/>
            <person name="Lim J."/>
            <person name="Dale J.M."/>
            <person name="Chen H."/>
            <person name="Shinn P."/>
            <person name="Palm C.J."/>
            <person name="Southwick A.M."/>
            <person name="Wu H.C."/>
            <person name="Kim C.J."/>
            <person name="Nguyen M."/>
            <person name="Pham P.K."/>
            <person name="Cheuk R.F."/>
            <person name="Karlin-Newmann G."/>
            <person name="Liu S.X."/>
            <person name="Lam B."/>
            <person name="Sakano H."/>
            <person name="Wu T."/>
            <person name="Yu G."/>
            <person name="Miranda M."/>
            <person name="Quach H.L."/>
            <person name="Tripp M."/>
            <person name="Chang C.H."/>
            <person name="Lee J.M."/>
            <person name="Toriumi M.J."/>
            <person name="Chan M.M."/>
            <person name="Tang C.C."/>
            <person name="Onodera C.S."/>
            <person name="Deng J.M."/>
            <person name="Akiyama K."/>
            <person name="Ansari Y."/>
            <person name="Arakawa T."/>
            <person name="Banh J."/>
            <person name="Banno F."/>
            <person name="Bowser L."/>
            <person name="Brooks S.Y."/>
            <person name="Carninci P."/>
            <person name="Chao Q."/>
            <person name="Choy N."/>
            <person name="Enju A."/>
            <person name="Goldsmith A.D."/>
            <person name="Gurjal M."/>
            <person name="Hansen N.F."/>
            <person name="Hayashizaki Y."/>
            <person name="Johnson-Hopson C."/>
            <person name="Hsuan V.W."/>
            <person name="Iida K."/>
            <person name="Karnes M."/>
            <person name="Khan S."/>
            <person name="Koesema E."/>
            <person name="Ishida J."/>
            <person name="Jiang P.X."/>
            <person name="Jones T."/>
            <person name="Kawai J."/>
            <person name="Kamiya A."/>
            <person name="Meyers C."/>
            <person name="Nakajima M."/>
            <person name="Narusaka M."/>
            <person name="Seki M."/>
            <person name="Sakurai T."/>
            <person name="Satou M."/>
            <person name="Tamse R."/>
            <person name="Vaysberg M."/>
            <person name="Wallender E.K."/>
            <person name="Wong C."/>
            <person name="Yamamura Y."/>
            <person name="Yuan S."/>
            <person name="Shinozaki K."/>
            <person name="Davis R.W."/>
            <person name="Theologis A."/>
            <person name="Ecker J.R."/>
        </authorList>
    </citation>
    <scope>NUCLEOTIDE SEQUENCE [LARGE SCALE MRNA]</scope>
    <source>
        <strain>cv. Columbia</strain>
    </source>
</reference>
<reference key="5">
    <citation type="submission" date="2006-07" db="EMBL/GenBank/DDBJ databases">
        <title>Large-scale analysis of RIKEN Arabidopsis full-length (RAFL) cDNAs.</title>
        <authorList>
            <person name="Totoki Y."/>
            <person name="Seki M."/>
            <person name="Ishida J."/>
            <person name="Nakajima M."/>
            <person name="Enju A."/>
            <person name="Kamiya A."/>
            <person name="Narusaka M."/>
            <person name="Shin-i T."/>
            <person name="Nakagawa M."/>
            <person name="Sakamoto N."/>
            <person name="Oishi K."/>
            <person name="Kohara Y."/>
            <person name="Kobayashi M."/>
            <person name="Toyoda A."/>
            <person name="Sakaki Y."/>
            <person name="Sakurai T."/>
            <person name="Iida K."/>
            <person name="Akiyama K."/>
            <person name="Satou M."/>
            <person name="Toyoda T."/>
            <person name="Konagaya A."/>
            <person name="Carninci P."/>
            <person name="Kawai J."/>
            <person name="Hayashizaki Y."/>
            <person name="Shinozaki K."/>
        </authorList>
    </citation>
    <scope>NUCLEOTIDE SEQUENCE [LARGE SCALE MRNA]</scope>
    <source>
        <strain>cv. Columbia</strain>
    </source>
</reference>
<reference key="6">
    <citation type="journal article" date="2000" name="Genome Biol.">
        <title>Higher plant cellulose synthases.</title>
        <authorList>
            <person name="Richmond T."/>
        </authorList>
    </citation>
    <scope>GENE FAMILY</scope>
    <scope>NOMENCLATURE</scope>
</reference>
<reference key="7">
    <citation type="journal article" date="2000" name="Plant Physiol.">
        <title>A comparative analysis of the plant cellulose synthase (CesA) gene family.</title>
        <authorList>
            <person name="Holland N."/>
            <person name="Holland D."/>
            <person name="Helentjaris T."/>
            <person name="Dhugga K.S."/>
            <person name="Xoconostle-Cazares B."/>
            <person name="Delmer D.P."/>
        </authorList>
    </citation>
    <scope>TISSUE SPECIFICITY</scope>
    <scope>DEVELOPMENTAL STAGE</scope>
</reference>
<reference key="8">
    <citation type="journal article" date="2002" name="Plant Physiol.">
        <title>Genetic complexity of cellulose synthase A gene function in Arabidopsis embryogenesis.</title>
        <authorList>
            <person name="Beeckman T."/>
            <person name="Przemeck G.K.H."/>
            <person name="Stamatiou G."/>
            <person name="Lau R."/>
            <person name="Terryn N."/>
            <person name="De Rycke R."/>
            <person name="Inze D."/>
            <person name="Berleth T."/>
        </authorList>
    </citation>
    <scope>TISSUE SPECIFICITY</scope>
</reference>
<reference key="9">
    <citation type="journal article" date="2003" name="Plant Cell">
        <title>Control of cellulose synthase complex localization in developing xylem.</title>
        <authorList>
            <person name="Gardiner J.C."/>
            <person name="Taylor N.G."/>
            <person name="Turner S.R."/>
        </authorList>
    </citation>
    <scope>SUBUNIT</scope>
</reference>
<reference key="10">
    <citation type="journal article" date="2007" name="Plant Cell">
        <title>Impairment of cellulose synthases required for Arabidopsis secondary cell wall formation enhances disease resistance.</title>
        <authorList>
            <person name="Hernandez-Blanco C."/>
            <person name="Feng D.X."/>
            <person name="Hu J."/>
            <person name="Sanchez-Vallet A."/>
            <person name="Deslandes L."/>
            <person name="Llorente F."/>
            <person name="Berrocal-Lobo M."/>
            <person name="Keller H."/>
            <person name="Barlet X."/>
            <person name="Sanchez-Rodriguez C."/>
            <person name="Anderson L.K."/>
            <person name="Somerville S."/>
            <person name="Marco Y."/>
            <person name="Molina A."/>
        </authorList>
    </citation>
    <scope>FUNCTION</scope>
    <scope>DISRUPTION PHENOTYPE</scope>
</reference>
<reference key="11">
    <citation type="journal article" date="2007" name="Plant Mol. Biol.">
        <title>Identification of cellulose synthase AtCesA7 (IRX3) in vivo phosphorylation sites -- a potential role in regulating protein degradation.</title>
        <authorList>
            <person name="Taylor N.G."/>
        </authorList>
    </citation>
    <scope>PHOSPHORYLATION AT SER-135</scope>
    <scope>IDENTIFICATION BY MASS SPECTROMETRY</scope>
</reference>
<reference key="12">
    <citation type="journal article" date="2016" name="Nat. Commun.">
        <title>Golgi-localized STELLO proteins regulate the assembly and trafficking of cellulose synthase complexes in Arabidopsis.</title>
        <authorList>
            <person name="Zhang Y."/>
            <person name="Nikolovski N."/>
            <person name="Sorieul M."/>
            <person name="Vellosillo T."/>
            <person name="McFarlane H.E."/>
            <person name="Dupree R."/>
            <person name="Kesten C."/>
            <person name="Schneider R."/>
            <person name="Driemeier C."/>
            <person name="Lathe R."/>
            <person name="Lampugnani E."/>
            <person name="Yu X."/>
            <person name="Ivakov A."/>
            <person name="Doblin M.S."/>
            <person name="Mortimer J.C."/>
            <person name="Brown S.P."/>
            <person name="Persson S."/>
            <person name="Dupree P."/>
        </authorList>
    </citation>
    <scope>INTERACTION WITH STL1 AND STL2</scope>
    <scope>LACK OF INTERACTION WITH GOT1</scope>
</reference>
<reference key="13">
    <citation type="journal article" date="2016" name="Science">
        <title>S-acylation of the cellulose synthase complex is essential for its plasma membrane localization.</title>
        <authorList>
            <person name="Kumar M."/>
            <person name="Wightman R."/>
            <person name="Atanassov I."/>
            <person name="Gupta A."/>
            <person name="Hurst C.H."/>
            <person name="Hemsley P.A."/>
            <person name="Turner S."/>
        </authorList>
    </citation>
    <scope>S-ACYLATION</scope>
</reference>
<sequence length="1049" mass="119599">MEPNTMASFDDEHRHSSFSAKICKVCGDEVKDDDNGQTFVACHVCVYPVCKPCYEYERSNGNKCCPQCNTLYKRHKGSPKIAGDEENNGPDDSDDELNIKYRQDGSSIHQNFAYGSENGDYNSKQQWRPNGRAFSSTGSVLGKDFEAERDGYTDAEWKERVDKWKARQEKRGLVTKGEQTNEDKEDDEEEYLDAEARQPLWRKVPISSSKISPYRIVIVLRLVILVFFFRFRILTPAKDAYPLWLISVICEIWFALSWILDQFPKWFPINRETYLDRLSMRFERDGEKNKLAPVDVFVSTVDPLKEPPIITANTILSILAVDYPVNKVSCYVSDDGASMLLFDTLSETSEFARRWVPFCKKYNVEPRAPEFYFSEKIDYLKDKVQTTFVKDRRAMKREYEEFKVRINALVAKAQKKPEEGWVMQDGTPWPGNNTRDHPGMIQVYLGKEGAFDIDGNELPRLVYVSREKRPGYAHHKKAGAMNAMVRVSAVLTNAPFMLNLDCDHYINNSKAIRESMCFLMDPQLGKKLCYVQFPQRFDGIDLNDRYANRNIVFFDINMRGLDGIQGPVYVGTGCVFNRPALYGYEPPVSEKRKKMTCDCWPSWICCCCGGGNRNHKSDSSKKKSGIKSLFSKLKKKTKKKSDDKTMSSYSRKRSSTEAIFDLEDIEEGLEGYDELEKSSLMSQKNFEKRFGMSPVFIASTLMENGGLPEATNTSSLIKEAIHVISCGYEEKTEWGKEIGWIYGSVTEDILTGFRMHCRGWKSVYCMPKRPAFKGSAPINLSDRLHQVLRWALGSVEIFFSRHCPLWYAWGGKLKILERLAYINTIVYPFTSIPLLAYCTIPAVCLLTGKFIIPTINNFASIWFLALFLSIIATAILELRWSGVSINDLWRNEQFWVIGGVSAHLFAVFQGLLKVLFGVDTNFTVTSKGASDEADEFGDLYLFKWTTLLIPPTTLIILNMVGVVAGVSDAINNGYGSWGPLFGKLFFAFWVIVHLYPFLKGLMGRQNRTPTIVVLWSILLASIFSLVWVRIDPFLPKQTGPLLKQCGVDC</sequence>
<name>CESA4_ARATH</name>
<protein>
    <recommendedName>
        <fullName evidence="14">Cellulose synthase A catalytic subunit 4 [UDP-forming]</fullName>
        <shortName evidence="14">AtCesA4</shortName>
        <ecNumber evidence="16">2.4.1.12</ecNumber>
    </recommendedName>
    <alternativeName>
        <fullName evidence="15">Protein IRREGULAR XYLEM 5</fullName>
        <shortName evidence="15">AtIRX5</shortName>
    </alternativeName>
</protein>
<organism>
    <name type="scientific">Arabidopsis thaliana</name>
    <name type="common">Mouse-ear cress</name>
    <dbReference type="NCBI Taxonomy" id="3702"/>
    <lineage>
        <taxon>Eukaryota</taxon>
        <taxon>Viridiplantae</taxon>
        <taxon>Streptophyta</taxon>
        <taxon>Embryophyta</taxon>
        <taxon>Tracheophyta</taxon>
        <taxon>Spermatophyta</taxon>
        <taxon>Magnoliopsida</taxon>
        <taxon>eudicotyledons</taxon>
        <taxon>Gunneridae</taxon>
        <taxon>Pentapetalae</taxon>
        <taxon>rosids</taxon>
        <taxon>malvids</taxon>
        <taxon>Brassicales</taxon>
        <taxon>Brassicaceae</taxon>
        <taxon>Camelineae</taxon>
        <taxon>Arabidopsis</taxon>
    </lineage>
</organism>
<feature type="chain" id="PRO_0000166370" description="Cellulose synthase A catalytic subunit 4 [UDP-forming]">
    <location>
        <begin position="1"/>
        <end position="1049"/>
    </location>
</feature>
<feature type="topological domain" description="Cytoplasmic" evidence="3">
    <location>
        <begin position="1"/>
        <end position="215"/>
    </location>
</feature>
<feature type="transmembrane region" description="Helical" evidence="3">
    <location>
        <begin position="216"/>
        <end position="236"/>
    </location>
</feature>
<feature type="topological domain" description="Extracellular" evidence="3">
    <location>
        <begin position="237"/>
        <end position="239"/>
    </location>
</feature>
<feature type="transmembrane region" description="Helical" evidence="3">
    <location>
        <begin position="240"/>
        <end position="260"/>
    </location>
</feature>
<feature type="topological domain" description="Cytoplasmic" evidence="3">
    <location>
        <begin position="261"/>
        <end position="831"/>
    </location>
</feature>
<feature type="transmembrane region" description="Helical" evidence="3">
    <location>
        <begin position="832"/>
        <end position="852"/>
    </location>
</feature>
<feature type="topological domain" description="Extracellular" evidence="3">
    <location>
        <begin position="853"/>
        <end position="857"/>
    </location>
</feature>
<feature type="transmembrane region" description="Helical" evidence="3">
    <location>
        <begin position="858"/>
        <end position="878"/>
    </location>
</feature>
<feature type="topological domain" description="Cytoplasmic" evidence="3">
    <location>
        <begin position="879"/>
        <end position="895"/>
    </location>
</feature>
<feature type="transmembrane region" description="Helical" evidence="3">
    <location>
        <begin position="896"/>
        <end position="916"/>
    </location>
</feature>
<feature type="topological domain" description="Extracellular" evidence="3">
    <location>
        <begin position="917"/>
        <end position="945"/>
    </location>
</feature>
<feature type="transmembrane region" description="Helical" evidence="3">
    <location>
        <begin position="946"/>
        <end position="966"/>
    </location>
</feature>
<feature type="topological domain" description="Cytoplasmic" evidence="3">
    <location>
        <begin position="967"/>
        <end position="977"/>
    </location>
</feature>
<feature type="transmembrane region" description="Helical" evidence="3">
    <location>
        <begin position="978"/>
        <end position="998"/>
    </location>
</feature>
<feature type="topological domain" description="Extracellular" evidence="3">
    <location>
        <begin position="999"/>
        <end position="1007"/>
    </location>
</feature>
<feature type="transmembrane region" description="Helical" evidence="3">
    <location>
        <begin position="1008"/>
        <end position="1028"/>
    </location>
</feature>
<feature type="topological domain" description="Cytoplasmic" evidence="3">
    <location>
        <begin position="1029"/>
        <end position="1049"/>
    </location>
</feature>
<feature type="zinc finger region" description="RING-type; degenerate">
    <location>
        <begin position="23"/>
        <end position="69"/>
    </location>
</feature>
<feature type="region of interest" description="Disordered" evidence="5">
    <location>
        <begin position="76"/>
        <end position="98"/>
    </location>
</feature>
<feature type="coiled-coil region" evidence="3">
    <location>
        <begin position="389"/>
        <end position="416"/>
    </location>
</feature>
<feature type="compositionally biased region" description="Acidic residues" evidence="5">
    <location>
        <begin position="84"/>
        <end position="96"/>
    </location>
</feature>
<feature type="active site" evidence="3">
    <location>
        <position position="335"/>
    </location>
</feature>
<feature type="active site" evidence="3">
    <location>
        <position position="748"/>
    </location>
</feature>
<feature type="binding site" evidence="2">
    <location>
        <position position="23"/>
    </location>
    <ligand>
        <name>Zn(2+)</name>
        <dbReference type="ChEBI" id="CHEBI:29105"/>
        <label>1</label>
    </ligand>
</feature>
<feature type="binding site" evidence="2">
    <location>
        <position position="26"/>
    </location>
    <ligand>
        <name>Zn(2+)</name>
        <dbReference type="ChEBI" id="CHEBI:29105"/>
        <label>1</label>
    </ligand>
</feature>
<feature type="binding site" evidence="2">
    <location>
        <position position="42"/>
    </location>
    <ligand>
        <name>Zn(2+)</name>
        <dbReference type="ChEBI" id="CHEBI:29105"/>
        <label>2</label>
    </ligand>
</feature>
<feature type="binding site" evidence="2">
    <location>
        <position position="45"/>
    </location>
    <ligand>
        <name>Zn(2+)</name>
        <dbReference type="ChEBI" id="CHEBI:29105"/>
        <label>2</label>
    </ligand>
</feature>
<feature type="binding site" evidence="2">
    <location>
        <position position="50"/>
    </location>
    <ligand>
        <name>Zn(2+)</name>
        <dbReference type="ChEBI" id="CHEBI:29105"/>
        <label>1</label>
    </ligand>
</feature>
<feature type="binding site" evidence="2">
    <location>
        <position position="53"/>
    </location>
    <ligand>
        <name>Zn(2+)</name>
        <dbReference type="ChEBI" id="CHEBI:29105"/>
        <label>1</label>
    </ligand>
</feature>
<feature type="binding site" evidence="2">
    <location>
        <position position="65"/>
    </location>
    <ligand>
        <name>Zn(2+)</name>
        <dbReference type="ChEBI" id="CHEBI:29105"/>
        <label>2</label>
    </ligand>
</feature>
<feature type="binding site" evidence="2">
    <location>
        <position position="68"/>
    </location>
    <ligand>
        <name>Zn(2+)</name>
        <dbReference type="ChEBI" id="CHEBI:29105"/>
        <label>2</label>
    </ligand>
</feature>
<feature type="binding site" evidence="1">
    <location>
        <position position="299"/>
    </location>
    <ligand>
        <name>UDP-alpha-D-glucose</name>
        <dbReference type="ChEBI" id="CHEBI:58885"/>
    </ligand>
</feature>
<feature type="binding site" evidence="1">
    <location>
        <position position="305"/>
    </location>
    <ligand>
        <name>UDP-alpha-D-glucose</name>
        <dbReference type="ChEBI" id="CHEBI:58885"/>
    </ligand>
</feature>
<feature type="binding site" evidence="1">
    <location>
        <position position="306"/>
    </location>
    <ligand>
        <name>UDP-alpha-D-glucose</name>
        <dbReference type="ChEBI" id="CHEBI:58885"/>
    </ligand>
</feature>
<feature type="binding site" evidence="1">
    <location>
        <position position="335"/>
    </location>
    <ligand>
        <name>UDP-alpha-D-glucose</name>
        <dbReference type="ChEBI" id="CHEBI:58885"/>
    </ligand>
</feature>
<feature type="binding site" evidence="1">
    <location>
        <position position="476"/>
    </location>
    <ligand>
        <name>UDP-alpha-D-glucose</name>
        <dbReference type="ChEBI" id="CHEBI:58885"/>
    </ligand>
</feature>
<feature type="binding site" evidence="1">
    <location>
        <position position="477"/>
    </location>
    <ligand>
        <name>Mn(2+)</name>
        <dbReference type="ChEBI" id="CHEBI:29035"/>
    </ligand>
</feature>
<feature type="binding site" evidence="1">
    <location>
        <position position="501"/>
    </location>
    <ligand>
        <name>Mn(2+)</name>
        <dbReference type="ChEBI" id="CHEBI:29035"/>
    </ligand>
</feature>
<feature type="modified residue" description="Phosphoserine" evidence="11">
    <location>
        <position position="135"/>
    </location>
</feature>
<feature type="glycosylation site" description="N-linked (GlcNAc...) asparagine" evidence="4">
    <location>
        <position position="921"/>
    </location>
</feature>
<feature type="mutagenesis site" description="In irx5-2; reduced levels of crystalline cellulose in secondary cell wall, dwarf and dark green, with irregular xylems and thinner cell walls in xylem and interfascicular tissues." evidence="8">
    <location>
        <begin position="989"/>
        <end position="1049"/>
    </location>
</feature>
<feature type="sequence conflict" description="In Ref. 1; AAO15532." evidence="16" ref="1">
    <original>W</original>
    <variation>C</variation>
    <location>
        <position position="127"/>
    </location>
</feature>
<feature type="sequence conflict" description="In Ref. 1; AAO15532." evidence="16" ref="1">
    <original>Y</original>
    <variation>EL</variation>
    <location>
        <position position="191"/>
    </location>
</feature>
<feature type="sequence conflict" description="In Ref. 1; AAO15532." evidence="16" ref="1">
    <original>L</original>
    <variation>H</variation>
    <location>
        <position position="542"/>
    </location>
</feature>
<feature type="sequence conflict" description="In Ref. 1; AAO15532." evidence="16" ref="1">
    <original>KSD</original>
    <variation>HKSKSSDS</variation>
    <location>
        <begin position="616"/>
        <end position="618"/>
    </location>
</feature>
<feature type="sequence conflict" description="In Ref. 1; AAO15532." evidence="16" ref="1">
    <original>F</original>
    <variation>L</variation>
    <location>
        <position position="630"/>
    </location>
</feature>
<feature type="sequence conflict" description="In Ref. 1; AAO15532." evidence="16" ref="1">
    <original>T</original>
    <variation>N</variation>
    <location>
        <position position="637"/>
    </location>
</feature>
<feature type="sequence conflict" description="In Ref. 1; AAO15532." evidence="16" ref="1">
    <original>S</original>
    <variation>A</variation>
    <location>
        <position position="655"/>
    </location>
</feature>